<gene>
    <name evidence="5" type="primary">icd-2</name>
    <name evidence="5" type="ORF">CBG05114</name>
</gene>
<protein>
    <recommendedName>
        <fullName>Nascent polypeptide-associated complex subunit alpha</fullName>
        <shortName>NAC-alpha</shortName>
    </recommendedName>
    <alternativeName>
        <fullName>Alpha-NAC</fullName>
    </alternativeName>
</protein>
<feature type="chain" id="PRO_0000135584" description="Nascent polypeptide-associated complex subunit alpha">
    <location>
        <begin position="1"/>
        <end position="197"/>
    </location>
</feature>
<feature type="domain" description="NAC-A/B" evidence="2">
    <location>
        <begin position="58"/>
        <end position="123"/>
    </location>
</feature>
<feature type="domain" description="UBA">
    <location>
        <begin position="158"/>
        <end position="195"/>
    </location>
</feature>
<feature type="region of interest" description="Disordered" evidence="3">
    <location>
        <begin position="1"/>
        <end position="30"/>
    </location>
</feature>
<feature type="region of interest" description="Disordered" evidence="3">
    <location>
        <begin position="134"/>
        <end position="155"/>
    </location>
</feature>
<feature type="compositionally biased region" description="Basic and acidic residues" evidence="3">
    <location>
        <begin position="1"/>
        <end position="18"/>
    </location>
</feature>
<feature type="compositionally biased region" description="Acidic residues" evidence="3">
    <location>
        <begin position="19"/>
        <end position="28"/>
    </location>
</feature>
<feature type="compositionally biased region" description="Acidic residues" evidence="3">
    <location>
        <begin position="144"/>
        <end position="155"/>
    </location>
</feature>
<dbReference type="EMBL" id="HE600988">
    <property type="protein sequence ID" value="CAP25692.1"/>
    <property type="molecule type" value="Genomic_DNA"/>
</dbReference>
<dbReference type="RefSeq" id="XP_002638770.1">
    <property type="nucleotide sequence ID" value="XM_002638724.1"/>
</dbReference>
<dbReference type="SMR" id="Q61UX1"/>
<dbReference type="FunCoup" id="Q61UX1">
    <property type="interactions" value="1867"/>
</dbReference>
<dbReference type="STRING" id="6238.Q61UX1"/>
<dbReference type="EnsemblMetazoa" id="CBG05114.1">
    <property type="protein sequence ID" value="CBG05114.1"/>
    <property type="gene ID" value="WBGene00027644"/>
</dbReference>
<dbReference type="GeneID" id="8580765"/>
<dbReference type="KEGG" id="cbr:CBG_05114"/>
<dbReference type="CTD" id="8580765"/>
<dbReference type="WormBase" id="CBG05114">
    <property type="protein sequence ID" value="CBP06992"/>
    <property type="gene ID" value="WBGene00027644"/>
    <property type="gene designation" value="Cbr-icd-2"/>
</dbReference>
<dbReference type="eggNOG" id="KOG2239">
    <property type="taxonomic scope" value="Eukaryota"/>
</dbReference>
<dbReference type="HOGENOM" id="CLU_057806_1_0_1"/>
<dbReference type="InParanoid" id="Q61UX1"/>
<dbReference type="OMA" id="TQHAQMS"/>
<dbReference type="OrthoDB" id="3169036at2759"/>
<dbReference type="Proteomes" id="UP000008549">
    <property type="component" value="Unassembled WGS sequence"/>
</dbReference>
<dbReference type="GO" id="GO:0005737">
    <property type="term" value="C:cytoplasm"/>
    <property type="evidence" value="ECO:0000318"/>
    <property type="project" value="GO_Central"/>
</dbReference>
<dbReference type="GO" id="GO:0005854">
    <property type="term" value="C:nascent polypeptide-associated complex"/>
    <property type="evidence" value="ECO:0007669"/>
    <property type="project" value="InterPro"/>
</dbReference>
<dbReference type="GO" id="GO:0051082">
    <property type="term" value="F:unfolded protein binding"/>
    <property type="evidence" value="ECO:0000318"/>
    <property type="project" value="GO_Central"/>
</dbReference>
<dbReference type="GO" id="GO:0006612">
    <property type="term" value="P:protein targeting to membrane"/>
    <property type="evidence" value="ECO:0000318"/>
    <property type="project" value="GO_Central"/>
</dbReference>
<dbReference type="GO" id="GO:0015031">
    <property type="term" value="P:protein transport"/>
    <property type="evidence" value="ECO:0007669"/>
    <property type="project" value="UniProtKB-KW"/>
</dbReference>
<dbReference type="CDD" id="cd22054">
    <property type="entry name" value="NAC_NACA"/>
    <property type="match status" value="1"/>
</dbReference>
<dbReference type="CDD" id="cd14358">
    <property type="entry name" value="UBA_NAC_euk"/>
    <property type="match status" value="1"/>
</dbReference>
<dbReference type="FunFam" id="2.20.70.30:FF:000002">
    <property type="entry name" value="Nascent polypeptide-associated complex (NAC), alpha subunit"/>
    <property type="match status" value="1"/>
</dbReference>
<dbReference type="Gene3D" id="1.10.8.10">
    <property type="entry name" value="DNA helicase RuvA subunit, C-terminal domain"/>
    <property type="match status" value="1"/>
</dbReference>
<dbReference type="Gene3D" id="2.20.70.30">
    <property type="entry name" value="Nascent polypeptide-associated complex domain"/>
    <property type="match status" value="1"/>
</dbReference>
<dbReference type="InterPro" id="IPR016641">
    <property type="entry name" value="EGD2/NACA0like"/>
</dbReference>
<dbReference type="InterPro" id="IPR044034">
    <property type="entry name" value="NAC-like_UBA"/>
</dbReference>
<dbReference type="InterPro" id="IPR038187">
    <property type="entry name" value="NAC_A/B_dom_sf"/>
</dbReference>
<dbReference type="InterPro" id="IPR002715">
    <property type="entry name" value="Nas_poly-pep-assoc_cplx_dom"/>
</dbReference>
<dbReference type="PANTHER" id="PTHR21713">
    <property type="entry name" value="NASCENT POLYPEPTIDE ASSOCIATED COMPLEX ALPHA SUBUNIT-RELATED"/>
    <property type="match status" value="1"/>
</dbReference>
<dbReference type="Pfam" id="PF01849">
    <property type="entry name" value="NAC"/>
    <property type="match status" value="1"/>
</dbReference>
<dbReference type="Pfam" id="PF19026">
    <property type="entry name" value="UBA_HYPK"/>
    <property type="match status" value="1"/>
</dbReference>
<dbReference type="PIRSF" id="PIRSF015901">
    <property type="entry name" value="NAC_alpha"/>
    <property type="match status" value="1"/>
</dbReference>
<dbReference type="SMART" id="SM01407">
    <property type="entry name" value="NAC"/>
    <property type="match status" value="1"/>
</dbReference>
<dbReference type="PROSITE" id="PS51151">
    <property type="entry name" value="NAC_AB"/>
    <property type="match status" value="1"/>
</dbReference>
<keyword id="KW-0653">Protein transport</keyword>
<keyword id="KW-1185">Reference proteome</keyword>
<keyword id="KW-0813">Transport</keyword>
<name>NACA_CAEBR</name>
<accession>Q61UX1</accession>
<accession>A8WZ82</accession>
<evidence type="ECO:0000250" key="1">
    <source>
        <dbReference type="UniProtKB" id="Q13765"/>
    </source>
</evidence>
<evidence type="ECO:0000255" key="2">
    <source>
        <dbReference type="PROSITE-ProRule" id="PRU00507"/>
    </source>
</evidence>
<evidence type="ECO:0000256" key="3">
    <source>
        <dbReference type="SAM" id="MobiDB-lite"/>
    </source>
</evidence>
<evidence type="ECO:0000305" key="4"/>
<evidence type="ECO:0000312" key="5">
    <source>
        <dbReference type="WormBase" id="CBG05114"/>
    </source>
</evidence>
<sequence length="197" mass="22025">MTGSTETRHNEKDVKEPQVDSDADSDNEAIEHQLTEEQRRVAEAAGLGDHIDKQAKQSRSEKKARKLFSKLGLKQVTGVSRVCIRKSKNILFVINKPDVFKSPGSDTYIIFGEAKIEDLTQHAQMSAIENMKPTREAPQLKTVEEDDNEDVEEDSTGIEEKDIELVISQANTTRNKAIRALKDADNDIVNAIMSLTM</sequence>
<proteinExistence type="inferred from homology"/>
<organism>
    <name type="scientific">Caenorhabditis briggsae</name>
    <dbReference type="NCBI Taxonomy" id="6238"/>
    <lineage>
        <taxon>Eukaryota</taxon>
        <taxon>Metazoa</taxon>
        <taxon>Ecdysozoa</taxon>
        <taxon>Nematoda</taxon>
        <taxon>Chromadorea</taxon>
        <taxon>Rhabditida</taxon>
        <taxon>Rhabditina</taxon>
        <taxon>Rhabditomorpha</taxon>
        <taxon>Rhabditoidea</taxon>
        <taxon>Rhabditidae</taxon>
        <taxon>Peloderinae</taxon>
        <taxon>Caenorhabditis</taxon>
    </lineage>
</organism>
<reference key="1">
    <citation type="journal article" date="2003" name="PLoS Biol.">
        <title>The genome sequence of Caenorhabditis briggsae: a platform for comparative genomics.</title>
        <authorList>
            <person name="Stein L.D."/>
            <person name="Bao Z."/>
            <person name="Blasiar D."/>
            <person name="Blumenthal T."/>
            <person name="Brent M.R."/>
            <person name="Chen N."/>
            <person name="Chinwalla A."/>
            <person name="Clarke L."/>
            <person name="Clee C."/>
            <person name="Coghlan A."/>
            <person name="Coulson A."/>
            <person name="D'Eustachio P."/>
            <person name="Fitch D.H.A."/>
            <person name="Fulton L.A."/>
            <person name="Fulton R.E."/>
            <person name="Griffiths-Jones S."/>
            <person name="Harris T.W."/>
            <person name="Hillier L.W."/>
            <person name="Kamath R."/>
            <person name="Kuwabara P.E."/>
            <person name="Mardis E.R."/>
            <person name="Marra M.A."/>
            <person name="Miner T.L."/>
            <person name="Minx P."/>
            <person name="Mullikin J.C."/>
            <person name="Plumb R.W."/>
            <person name="Rogers J."/>
            <person name="Schein J.E."/>
            <person name="Sohrmann M."/>
            <person name="Spieth J."/>
            <person name="Stajich J.E."/>
            <person name="Wei C."/>
            <person name="Willey D."/>
            <person name="Wilson R.K."/>
            <person name="Durbin R.M."/>
            <person name="Waterston R.H."/>
        </authorList>
    </citation>
    <scope>NUCLEOTIDE SEQUENCE [LARGE SCALE GENOMIC DNA]</scope>
    <source>
        <strain>AF16</strain>
    </source>
</reference>
<comment type="function">
    <text evidence="1">May promote appropriate targeting of ribosome-nascent polypeptide complexes.</text>
</comment>
<comment type="similarity">
    <text evidence="4">Belongs to the NAC-alpha family.</text>
</comment>